<reference key="1">
    <citation type="submission" date="2008-06" db="EMBL/GenBank/DDBJ databases">
        <title>Genome and proteome analysis of A. pleuropneumoniae serotype 7.</title>
        <authorList>
            <person name="Linke B."/>
            <person name="Buettner F."/>
            <person name="Martinez-Arias R."/>
            <person name="Goesmann A."/>
            <person name="Baltes N."/>
            <person name="Tegetmeyer H."/>
            <person name="Singh M."/>
            <person name="Gerlach G.F."/>
        </authorList>
    </citation>
    <scope>NUCLEOTIDE SEQUENCE [LARGE SCALE GENOMIC DNA]</scope>
    <source>
        <strain>AP76</strain>
    </source>
</reference>
<sequence length="864" mass="95597">MTQDLSKHTPMMAQYLQLKAQNPDILLFYRMGDFYELFYDDAKKAAALLDISLTKRGASAGEPIPMAGVPYHAVEGYLAKLVSLGESVAICEQIGDPATSKGPVERKVVRIVTPGTVSDEALLPERQDNLVAAIYEEKGVFAIATLDMTSGRFLITELPNKEALAAELQRLLPAEILYAEDFSAAEILNNYKGLRRRPVWEFELVTAINLLNRQFGTQSLAGFGVEKAVVALCAAGCVLHYAQETQRTALPHINSIHLAQNSDTVLLDAATRRNLELTQNLAGGTENTLAAVLDKCVTPMGSRLLKRWIHQPIRDLEKLKKRQDIIDTLQKEQRIELLQPLLQNVGDMERILARVALRSARPRDLTRLRTALAQLPDIAKNAKNLTASLDALVAQIGDFSELHALLERAIIETPPQLIRDGGVIAEGYNAELDEWRELSAGATQYLENLEIREREATGIDTLKIGFNAVHGYYIQISQGQAHKAPMHYVRRQTLKNAERYIIPELKTYEDKVLKAKGASLALEKQLYDELFDLLMPRLGEMQLAAMALSELDVLTNLAERAESLNYVRPTFSLQRGVNIKGGRHPVVEQVLKDPFIANPVFLNAQRHLLVVTGPNMGGKSTYMRQIALISLMAYIGSFVPADSAEIGALDRIFTRIGASDDLASGRSTFMVEMTEMANILHQATENSLVLIDEIGRGTSTYDGLSLAWACAEWLAKKTQSLTLFATHYFELTSLPSQLKGVANVHLDAREHQDSIVFMHSVQEGAASKSYGLAVAALAGVPKQVIQLAKQRLAHLEEISLQTKEAHDNPQGDLLFAADLQETPQIQPLVAQQSELEKALMSIDPDELTPRQALEALYRLKKLMA</sequence>
<organism>
    <name type="scientific">Actinobacillus pleuropneumoniae serotype 7 (strain AP76)</name>
    <dbReference type="NCBI Taxonomy" id="537457"/>
    <lineage>
        <taxon>Bacteria</taxon>
        <taxon>Pseudomonadati</taxon>
        <taxon>Pseudomonadota</taxon>
        <taxon>Gammaproteobacteria</taxon>
        <taxon>Pasteurellales</taxon>
        <taxon>Pasteurellaceae</taxon>
        <taxon>Actinobacillus</taxon>
    </lineage>
</organism>
<accession>B3H2J9</accession>
<gene>
    <name evidence="1" type="primary">mutS</name>
    <name type="ordered locus">APP7_1664</name>
</gene>
<name>MUTS_ACTP7</name>
<evidence type="ECO:0000255" key="1">
    <source>
        <dbReference type="HAMAP-Rule" id="MF_00096"/>
    </source>
</evidence>
<protein>
    <recommendedName>
        <fullName evidence="1">DNA mismatch repair protein MutS</fullName>
    </recommendedName>
</protein>
<feature type="chain" id="PRO_1000093604" description="DNA mismatch repair protein MutS">
    <location>
        <begin position="1"/>
        <end position="864"/>
    </location>
</feature>
<feature type="binding site" evidence="1">
    <location>
        <begin position="613"/>
        <end position="620"/>
    </location>
    <ligand>
        <name>ATP</name>
        <dbReference type="ChEBI" id="CHEBI:30616"/>
    </ligand>
</feature>
<dbReference type="EMBL" id="CP001091">
    <property type="protein sequence ID" value="ACE62316.1"/>
    <property type="molecule type" value="Genomic_DNA"/>
</dbReference>
<dbReference type="RefSeq" id="WP_005618072.1">
    <property type="nucleotide sequence ID" value="NC_010939.1"/>
</dbReference>
<dbReference type="SMR" id="B3H2J9"/>
<dbReference type="KEGG" id="apa:APP7_1664"/>
<dbReference type="HOGENOM" id="CLU_002472_4_0_6"/>
<dbReference type="Proteomes" id="UP000001226">
    <property type="component" value="Chromosome"/>
</dbReference>
<dbReference type="GO" id="GO:0005829">
    <property type="term" value="C:cytosol"/>
    <property type="evidence" value="ECO:0007669"/>
    <property type="project" value="TreeGrafter"/>
</dbReference>
<dbReference type="GO" id="GO:0005524">
    <property type="term" value="F:ATP binding"/>
    <property type="evidence" value="ECO:0007669"/>
    <property type="project" value="UniProtKB-UniRule"/>
</dbReference>
<dbReference type="GO" id="GO:0140664">
    <property type="term" value="F:ATP-dependent DNA damage sensor activity"/>
    <property type="evidence" value="ECO:0007669"/>
    <property type="project" value="InterPro"/>
</dbReference>
<dbReference type="GO" id="GO:0003684">
    <property type="term" value="F:damaged DNA binding"/>
    <property type="evidence" value="ECO:0007669"/>
    <property type="project" value="UniProtKB-UniRule"/>
</dbReference>
<dbReference type="GO" id="GO:0030983">
    <property type="term" value="F:mismatched DNA binding"/>
    <property type="evidence" value="ECO:0007669"/>
    <property type="project" value="InterPro"/>
</dbReference>
<dbReference type="GO" id="GO:0006298">
    <property type="term" value="P:mismatch repair"/>
    <property type="evidence" value="ECO:0007669"/>
    <property type="project" value="UniProtKB-UniRule"/>
</dbReference>
<dbReference type="CDD" id="cd03284">
    <property type="entry name" value="ABC_MutS1"/>
    <property type="match status" value="1"/>
</dbReference>
<dbReference type="FunFam" id="1.10.1420.10:FF:000002">
    <property type="entry name" value="DNA mismatch repair protein MutS"/>
    <property type="match status" value="1"/>
</dbReference>
<dbReference type="FunFam" id="3.40.1170.10:FF:000001">
    <property type="entry name" value="DNA mismatch repair protein MutS"/>
    <property type="match status" value="1"/>
</dbReference>
<dbReference type="FunFam" id="3.40.50.300:FF:000283">
    <property type="entry name" value="DNA mismatch repair protein MutS"/>
    <property type="match status" value="1"/>
</dbReference>
<dbReference type="Gene3D" id="1.10.1420.10">
    <property type="match status" value="2"/>
</dbReference>
<dbReference type="Gene3D" id="6.10.140.430">
    <property type="match status" value="1"/>
</dbReference>
<dbReference type="Gene3D" id="3.40.1170.10">
    <property type="entry name" value="DNA repair protein MutS, domain I"/>
    <property type="match status" value="1"/>
</dbReference>
<dbReference type="Gene3D" id="3.30.420.110">
    <property type="entry name" value="MutS, connector domain"/>
    <property type="match status" value="1"/>
</dbReference>
<dbReference type="Gene3D" id="3.40.50.300">
    <property type="entry name" value="P-loop containing nucleotide triphosphate hydrolases"/>
    <property type="match status" value="1"/>
</dbReference>
<dbReference type="HAMAP" id="MF_00096">
    <property type="entry name" value="MutS"/>
    <property type="match status" value="1"/>
</dbReference>
<dbReference type="InterPro" id="IPR005748">
    <property type="entry name" value="DNA_mismatch_repair_MutS"/>
</dbReference>
<dbReference type="InterPro" id="IPR007695">
    <property type="entry name" value="DNA_mismatch_repair_MutS-lik_N"/>
</dbReference>
<dbReference type="InterPro" id="IPR017261">
    <property type="entry name" value="DNA_mismatch_repair_MutS/MSH"/>
</dbReference>
<dbReference type="InterPro" id="IPR000432">
    <property type="entry name" value="DNA_mismatch_repair_MutS_C"/>
</dbReference>
<dbReference type="InterPro" id="IPR007861">
    <property type="entry name" value="DNA_mismatch_repair_MutS_clamp"/>
</dbReference>
<dbReference type="InterPro" id="IPR007696">
    <property type="entry name" value="DNA_mismatch_repair_MutS_core"/>
</dbReference>
<dbReference type="InterPro" id="IPR016151">
    <property type="entry name" value="DNA_mismatch_repair_MutS_N"/>
</dbReference>
<dbReference type="InterPro" id="IPR036187">
    <property type="entry name" value="DNA_mismatch_repair_MutS_sf"/>
</dbReference>
<dbReference type="InterPro" id="IPR007860">
    <property type="entry name" value="DNA_mmatch_repair_MutS_con_dom"/>
</dbReference>
<dbReference type="InterPro" id="IPR045076">
    <property type="entry name" value="MutS"/>
</dbReference>
<dbReference type="InterPro" id="IPR036678">
    <property type="entry name" value="MutS_con_dom_sf"/>
</dbReference>
<dbReference type="InterPro" id="IPR027417">
    <property type="entry name" value="P-loop_NTPase"/>
</dbReference>
<dbReference type="NCBIfam" id="TIGR01070">
    <property type="entry name" value="mutS1"/>
    <property type="match status" value="1"/>
</dbReference>
<dbReference type="NCBIfam" id="NF003810">
    <property type="entry name" value="PRK05399.1"/>
    <property type="match status" value="1"/>
</dbReference>
<dbReference type="PANTHER" id="PTHR11361:SF34">
    <property type="entry name" value="DNA MISMATCH REPAIR PROTEIN MSH1, MITOCHONDRIAL"/>
    <property type="match status" value="1"/>
</dbReference>
<dbReference type="PANTHER" id="PTHR11361">
    <property type="entry name" value="DNA MISMATCH REPAIR PROTEIN MUTS FAMILY MEMBER"/>
    <property type="match status" value="1"/>
</dbReference>
<dbReference type="Pfam" id="PF01624">
    <property type="entry name" value="MutS_I"/>
    <property type="match status" value="1"/>
</dbReference>
<dbReference type="Pfam" id="PF05188">
    <property type="entry name" value="MutS_II"/>
    <property type="match status" value="1"/>
</dbReference>
<dbReference type="Pfam" id="PF05192">
    <property type="entry name" value="MutS_III"/>
    <property type="match status" value="1"/>
</dbReference>
<dbReference type="Pfam" id="PF05190">
    <property type="entry name" value="MutS_IV"/>
    <property type="match status" value="1"/>
</dbReference>
<dbReference type="Pfam" id="PF00488">
    <property type="entry name" value="MutS_V"/>
    <property type="match status" value="1"/>
</dbReference>
<dbReference type="PIRSF" id="PIRSF037677">
    <property type="entry name" value="DNA_mis_repair_Msh6"/>
    <property type="match status" value="1"/>
</dbReference>
<dbReference type="SMART" id="SM00534">
    <property type="entry name" value="MUTSac"/>
    <property type="match status" value="1"/>
</dbReference>
<dbReference type="SMART" id="SM00533">
    <property type="entry name" value="MUTSd"/>
    <property type="match status" value="1"/>
</dbReference>
<dbReference type="SUPFAM" id="SSF55271">
    <property type="entry name" value="DNA repair protein MutS, domain I"/>
    <property type="match status" value="1"/>
</dbReference>
<dbReference type="SUPFAM" id="SSF53150">
    <property type="entry name" value="DNA repair protein MutS, domain II"/>
    <property type="match status" value="1"/>
</dbReference>
<dbReference type="SUPFAM" id="SSF48334">
    <property type="entry name" value="DNA repair protein MutS, domain III"/>
    <property type="match status" value="1"/>
</dbReference>
<dbReference type="SUPFAM" id="SSF52540">
    <property type="entry name" value="P-loop containing nucleoside triphosphate hydrolases"/>
    <property type="match status" value="1"/>
</dbReference>
<dbReference type="PROSITE" id="PS00486">
    <property type="entry name" value="DNA_MISMATCH_REPAIR_2"/>
    <property type="match status" value="1"/>
</dbReference>
<keyword id="KW-0067">ATP-binding</keyword>
<keyword id="KW-0227">DNA damage</keyword>
<keyword id="KW-0234">DNA repair</keyword>
<keyword id="KW-0238">DNA-binding</keyword>
<keyword id="KW-0547">Nucleotide-binding</keyword>
<proteinExistence type="inferred from homology"/>
<comment type="function">
    <text evidence="1">This protein is involved in the repair of mismatches in DNA. It is possible that it carries out the mismatch recognition step. This protein has a weak ATPase activity.</text>
</comment>
<comment type="similarity">
    <text evidence="1">Belongs to the DNA mismatch repair MutS family.</text>
</comment>